<protein>
    <recommendedName>
        <fullName>BTB and MATH domain-containing protein 42</fullName>
    </recommendedName>
</protein>
<sequence>MSSRSSWSSTEQINRTISSRADDLPPQPRRLEVVSKQATRVTALSTKLEWKIEQFEKLMKLIKNGSNLISRMFSVPDAPTVCWELHVYPNGKRDEDVNNVSFFLRQVGLARGEEPIMTEFQIYALDANNQRVSVCRDTKDFTNQQGRGKFQVSRDKMLGALRSDGTLFLICEVEYFPPGSKISVEPVVDEDVSTEEQEEMPEVIVRANNRSMWEDELFTDCVIHVGNKHIKAHRCILGQNSPVFKSMFSSPNMIEAQKGEIHIEDAKYDSVRAMVEFMYTGATESLESQGNIDEILAIADKYEVLMLKDQCERLIAQTINLKNVTQIAMFSDTYTADYLKSAVIRFLTTHHRVVIKTQDWISLKKSRHELANELLEAVLSTDQDDDDVTSNIPISVSPPPARKRLRRSAK</sequence>
<dbReference type="EMBL" id="FO080718">
    <property type="protein sequence ID" value="CCD66124.1"/>
    <property type="molecule type" value="Genomic_DNA"/>
</dbReference>
<dbReference type="PIR" id="S44626">
    <property type="entry name" value="S44626"/>
</dbReference>
<dbReference type="RefSeq" id="NP_498784.1">
    <property type="nucleotide sequence ID" value="NM_066383.7"/>
</dbReference>
<dbReference type="SMR" id="P34371"/>
<dbReference type="BioGRID" id="41357">
    <property type="interactions" value="14"/>
</dbReference>
<dbReference type="DIP" id="DIP-26215N"/>
<dbReference type="FunCoup" id="P34371">
    <property type="interactions" value="650"/>
</dbReference>
<dbReference type="IntAct" id="P34371">
    <property type="interactions" value="7"/>
</dbReference>
<dbReference type="STRING" id="6239.C50C3.8.1"/>
<dbReference type="PaxDb" id="6239-C50C3.8"/>
<dbReference type="PeptideAtlas" id="P34371"/>
<dbReference type="EnsemblMetazoa" id="C50C3.8.1">
    <property type="protein sequence ID" value="C50C3.8.1"/>
    <property type="gene ID" value="WBGene00016803"/>
</dbReference>
<dbReference type="GeneID" id="176152"/>
<dbReference type="KEGG" id="cel:CELE_C50C3.8"/>
<dbReference type="UCSC" id="C50C3.8.1">
    <property type="organism name" value="c. elegans"/>
</dbReference>
<dbReference type="AGR" id="WB:WBGene00016803"/>
<dbReference type="CTD" id="176152"/>
<dbReference type="WormBase" id="C50C3.8">
    <property type="protein sequence ID" value="CE00124"/>
    <property type="gene ID" value="WBGene00016803"/>
    <property type="gene designation" value="bath-42"/>
</dbReference>
<dbReference type="eggNOG" id="KOG1987">
    <property type="taxonomic scope" value="Eukaryota"/>
</dbReference>
<dbReference type="HOGENOM" id="CLU_056825_0_0_1"/>
<dbReference type="InParanoid" id="P34371"/>
<dbReference type="OMA" id="TLFLICE"/>
<dbReference type="OrthoDB" id="6777468at2759"/>
<dbReference type="PhylomeDB" id="P34371"/>
<dbReference type="Reactome" id="R-CEL-5632684">
    <property type="pathway name" value="Hedgehog 'on' state"/>
</dbReference>
<dbReference type="Reactome" id="R-CEL-9706019">
    <property type="pathway name" value="RHOBTB3 ATPase cycle"/>
</dbReference>
<dbReference type="UniPathway" id="UPA00143"/>
<dbReference type="PRO" id="PR:P34371"/>
<dbReference type="Proteomes" id="UP000001940">
    <property type="component" value="Chromosome III"/>
</dbReference>
<dbReference type="Bgee" id="WBGene00016803">
    <property type="expression patterns" value="Expressed in germ line (C elegans) and 4 other cell types or tissues"/>
</dbReference>
<dbReference type="GO" id="GO:0005737">
    <property type="term" value="C:cytoplasm"/>
    <property type="evidence" value="ECO:0000318"/>
    <property type="project" value="GO_Central"/>
</dbReference>
<dbReference type="GO" id="GO:0005634">
    <property type="term" value="C:nucleus"/>
    <property type="evidence" value="ECO:0000318"/>
    <property type="project" value="GO_Central"/>
</dbReference>
<dbReference type="GO" id="GO:0031625">
    <property type="term" value="F:ubiquitin protein ligase binding"/>
    <property type="evidence" value="ECO:0000318"/>
    <property type="project" value="GO_Central"/>
</dbReference>
<dbReference type="GO" id="GO:0043161">
    <property type="term" value="P:proteasome-mediated ubiquitin-dependent protein catabolic process"/>
    <property type="evidence" value="ECO:0000318"/>
    <property type="project" value="GO_Central"/>
</dbReference>
<dbReference type="GO" id="GO:0016567">
    <property type="term" value="P:protein ubiquitination"/>
    <property type="evidence" value="ECO:0007669"/>
    <property type="project" value="UniProtKB-UniPathway"/>
</dbReference>
<dbReference type="GO" id="GO:0030162">
    <property type="term" value="P:regulation of proteolysis"/>
    <property type="evidence" value="ECO:0000318"/>
    <property type="project" value="GO_Central"/>
</dbReference>
<dbReference type="CDD" id="cd18186">
    <property type="entry name" value="BTB_POZ_ZBTB_KLHL-like"/>
    <property type="match status" value="1"/>
</dbReference>
<dbReference type="CDD" id="cd00121">
    <property type="entry name" value="MATH"/>
    <property type="match status" value="1"/>
</dbReference>
<dbReference type="Gene3D" id="1.25.40.420">
    <property type="match status" value="1"/>
</dbReference>
<dbReference type="Gene3D" id="2.60.210.10">
    <property type="entry name" value="Apoptosis, Tumor Necrosis Factor Receptor Associated Protein 2, Chain A"/>
    <property type="match status" value="1"/>
</dbReference>
<dbReference type="Gene3D" id="3.30.710.10">
    <property type="entry name" value="Potassium Channel Kv1.1, Chain A"/>
    <property type="match status" value="1"/>
</dbReference>
<dbReference type="InterPro" id="IPR000210">
    <property type="entry name" value="BTB/POZ_dom"/>
</dbReference>
<dbReference type="InterPro" id="IPR002083">
    <property type="entry name" value="MATH/TRAF_dom"/>
</dbReference>
<dbReference type="InterPro" id="IPR011333">
    <property type="entry name" value="SKP1/BTB/POZ_sf"/>
</dbReference>
<dbReference type="InterPro" id="IPR008974">
    <property type="entry name" value="TRAF-like"/>
</dbReference>
<dbReference type="PANTHER" id="PTHR24413">
    <property type="entry name" value="SPECKLE-TYPE POZ PROTEIN"/>
    <property type="match status" value="1"/>
</dbReference>
<dbReference type="Pfam" id="PF00651">
    <property type="entry name" value="BTB"/>
    <property type="match status" value="1"/>
</dbReference>
<dbReference type="Pfam" id="PF22486">
    <property type="entry name" value="MATH_2"/>
    <property type="match status" value="1"/>
</dbReference>
<dbReference type="SMART" id="SM00225">
    <property type="entry name" value="BTB"/>
    <property type="match status" value="1"/>
</dbReference>
<dbReference type="SMART" id="SM00061">
    <property type="entry name" value="MATH"/>
    <property type="match status" value="1"/>
</dbReference>
<dbReference type="SUPFAM" id="SSF54695">
    <property type="entry name" value="POZ domain"/>
    <property type="match status" value="1"/>
</dbReference>
<dbReference type="SUPFAM" id="SSF49599">
    <property type="entry name" value="TRAF domain-like"/>
    <property type="match status" value="1"/>
</dbReference>
<dbReference type="PROSITE" id="PS50097">
    <property type="entry name" value="BTB"/>
    <property type="match status" value="1"/>
</dbReference>
<dbReference type="PROSITE" id="PS50144">
    <property type="entry name" value="MATH"/>
    <property type="match status" value="1"/>
</dbReference>
<name>BAT42_CAEEL</name>
<accession>P34371</accession>
<comment type="function">
    <text evidence="4">Probable substrate-specific adapter of an E3 ubiquitin-protein ligase complex which mediates the ubiquitination and subsequent proteasomal degradation of target proteins.</text>
</comment>
<comment type="pathway">
    <text>Protein modification; protein ubiquitination.</text>
</comment>
<comment type="subunit">
    <text evidence="4">Interacts with cul-3.</text>
</comment>
<comment type="interaction">
    <interactant intactId="EBI-315422">
        <id>P34371</id>
    </interactant>
    <interactant intactId="EBI-593075">
        <id>Q17391</id>
        <label>cul-3</label>
    </interactant>
    <organismsDiffer>false</organismsDiffer>
    <experiments>3</experiments>
</comment>
<proteinExistence type="evidence at protein level"/>
<feature type="chain" id="PRO_0000065254" description="BTB and MATH domain-containing protein 42">
    <location>
        <begin position="1"/>
        <end position="410"/>
    </location>
</feature>
<feature type="domain" description="MATH" evidence="2">
    <location>
        <begin position="45"/>
        <end position="173"/>
    </location>
</feature>
<feature type="domain" description="BTB" evidence="1">
    <location>
        <begin position="219"/>
        <end position="287"/>
    </location>
</feature>
<feature type="region of interest" description="Disordered" evidence="3">
    <location>
        <begin position="1"/>
        <end position="29"/>
    </location>
</feature>
<feature type="region of interest" description="Disordered" evidence="3">
    <location>
        <begin position="389"/>
        <end position="410"/>
    </location>
</feature>
<feature type="compositionally biased region" description="Polar residues" evidence="3">
    <location>
        <begin position="1"/>
        <end position="19"/>
    </location>
</feature>
<feature type="compositionally biased region" description="Basic residues" evidence="3">
    <location>
        <begin position="401"/>
        <end position="410"/>
    </location>
</feature>
<evidence type="ECO:0000255" key="1">
    <source>
        <dbReference type="PROSITE-ProRule" id="PRU00037"/>
    </source>
</evidence>
<evidence type="ECO:0000255" key="2">
    <source>
        <dbReference type="PROSITE-ProRule" id="PRU00129"/>
    </source>
</evidence>
<evidence type="ECO:0000256" key="3">
    <source>
        <dbReference type="SAM" id="MobiDB-lite"/>
    </source>
</evidence>
<evidence type="ECO:0000269" key="4">
    <source>
    </source>
</evidence>
<organism>
    <name type="scientific">Caenorhabditis elegans</name>
    <dbReference type="NCBI Taxonomy" id="6239"/>
    <lineage>
        <taxon>Eukaryota</taxon>
        <taxon>Metazoa</taxon>
        <taxon>Ecdysozoa</taxon>
        <taxon>Nematoda</taxon>
        <taxon>Chromadorea</taxon>
        <taxon>Rhabditida</taxon>
        <taxon>Rhabditina</taxon>
        <taxon>Rhabditomorpha</taxon>
        <taxon>Rhabditoidea</taxon>
        <taxon>Rhabditidae</taxon>
        <taxon>Peloderinae</taxon>
        <taxon>Caenorhabditis</taxon>
    </lineage>
</organism>
<gene>
    <name type="primary">bath-42</name>
    <name type="ORF">C50C3.8</name>
</gene>
<keyword id="KW-1185">Reference proteome</keyword>
<keyword id="KW-0833">Ubl conjugation pathway</keyword>
<reference key="1">
    <citation type="journal article" date="1994" name="Nature">
        <title>2.2 Mb of contiguous nucleotide sequence from chromosome III of C. elegans.</title>
        <authorList>
            <person name="Wilson R."/>
            <person name="Ainscough R."/>
            <person name="Anderson K."/>
            <person name="Baynes C."/>
            <person name="Berks M."/>
            <person name="Bonfield J."/>
            <person name="Burton J."/>
            <person name="Connell M."/>
            <person name="Copsey T."/>
            <person name="Cooper J."/>
            <person name="Coulson A."/>
            <person name="Craxton M."/>
            <person name="Dear S."/>
            <person name="Du Z."/>
            <person name="Durbin R."/>
            <person name="Favello A."/>
            <person name="Fraser A."/>
            <person name="Fulton L."/>
            <person name="Gardner A."/>
            <person name="Green P."/>
            <person name="Hawkins T."/>
            <person name="Hillier L."/>
            <person name="Jier M."/>
            <person name="Johnston L."/>
            <person name="Jones M."/>
            <person name="Kershaw J."/>
            <person name="Kirsten J."/>
            <person name="Laisster N."/>
            <person name="Latreille P."/>
            <person name="Lightning J."/>
            <person name="Lloyd C."/>
            <person name="Mortimore B."/>
            <person name="O'Callaghan M."/>
            <person name="Parsons J."/>
            <person name="Percy C."/>
            <person name="Rifken L."/>
            <person name="Roopra A."/>
            <person name="Saunders D."/>
            <person name="Shownkeen R."/>
            <person name="Sims M."/>
            <person name="Smaldon N."/>
            <person name="Smith A."/>
            <person name="Smith M."/>
            <person name="Sonnhammer E."/>
            <person name="Staden R."/>
            <person name="Sulston J."/>
            <person name="Thierry-Mieg J."/>
            <person name="Thomas K."/>
            <person name="Vaudin M."/>
            <person name="Vaughan K."/>
            <person name="Waterston R."/>
            <person name="Watson A."/>
            <person name="Weinstock L."/>
            <person name="Wilkinson-Sproat J."/>
            <person name="Wohldman P."/>
        </authorList>
    </citation>
    <scope>NUCLEOTIDE SEQUENCE [LARGE SCALE GENOMIC DNA]</scope>
    <source>
        <strain>Bristol N2</strain>
    </source>
</reference>
<reference key="2">
    <citation type="journal article" date="1998" name="Science">
        <title>Genome sequence of the nematode C. elegans: a platform for investigating biology.</title>
        <authorList>
            <consortium name="The C. elegans sequencing consortium"/>
        </authorList>
    </citation>
    <scope>NUCLEOTIDE SEQUENCE [LARGE SCALE GENOMIC DNA]</scope>
    <source>
        <strain>Bristol N2</strain>
    </source>
</reference>
<reference key="3">
    <citation type="journal article" date="2003" name="Nature">
        <title>BTB proteins are substrate-specific adaptors in an SCF-like modular ubiquitin ligase containing CUL-3.</title>
        <authorList>
            <person name="Xu L."/>
            <person name="Wei Y."/>
            <person name="Reboul J."/>
            <person name="Vaglio P."/>
            <person name="Shin T.H."/>
            <person name="Vidal M."/>
            <person name="Elledge S.J."/>
            <person name="Harper J.W."/>
        </authorList>
    </citation>
    <scope>FUNCTION AS AN E3 UBIQUITIN-PROTEIN LIGASE</scope>
    <scope>INTERACTION WITH CUL3</scope>
</reference>